<sequence length="866" mass="99406">MEEGNNNEEVIHLNNFHCHRGQEWINLRDGPITISDSSDEERIPMLVTPAPQQHEEEDLDDDVILTEDDSEDDYGEFLDLGPPGISEFTKPSGQTEREPKPGPSHNQAANDIVNPRSEQKVIILEEGSLLYTESDPLETQNQSSEDSETELLSNLGESAALADDQAIEEDCWLDHPYFQSLNQQPREITNQVVPQERQPEAELGRLLFQHEFPGPAFPRPEPQQGGISGPSSPQPAHPLGEFEDQQLASDDEEPGPAFPMQESQEPNLENIWGQEAAEVDQELVELLVKETEARFPDVANGFIEEIIHFKNYYDLNVLCNFLLENPDYPKREDRIIINPSSSLLASQDETKLPKIDFFDYSKLTPLDQRCFIQAADLLMADFKVLSSQDIKWALHELKGHYAITRKALSDAIKKWQELSPETSGKRKKRKQMNQYSYIDFKFEQGDIKIEKRMFFLENKRRHCRSYDRRALLPAVQQEQEFYEQKIKEMAEHEDFLLALQMNEEQYQKDGQLIECRCCYGEFPFEELTQCADAHLFCKECLIRYAQEAVFGSGKLELSCMEGSCTCSFPTSELEKVLPQTILYKYYERKAEEEVAAAYADELVRCPSCSFPALLDSDVKRFSCPNPHCRKETCRKCQGLWKEHNGLTCEELAEKDDIKYRTSIEEKMTAARIRKCHKCGTGLIKSEGCNRMSCRCGAQMCYLCRVSINGYDHFCQHPRSPGAPCQECSRCSLWTDPTEDDEKLIEEIQKEAEEEQKRKNGENTFKRIGPPLEKPVEKVQRVEALPRPVPQNLPQPQMPPYAFAHPPFPLPPVRPVFNNFPLNMGPIPAPYVPPLPNVRVNYDFGPIHMPLEHNLPMHFGPQPRHRF</sequence>
<dbReference type="EC" id="2.3.2.27" evidence="11 13"/>
<dbReference type="EMBL" id="AY062174">
    <property type="protein sequence ID" value="AAL38043.1"/>
    <property type="molecule type" value="mRNA"/>
</dbReference>
<dbReference type="EMBL" id="AF513717">
    <property type="protein sequence ID" value="AAP47174.1"/>
    <property type="molecule type" value="mRNA"/>
</dbReference>
<dbReference type="EMBL" id="AF513718">
    <property type="protein sequence ID" value="AAP47175.1"/>
    <property type="molecule type" value="mRNA"/>
</dbReference>
<dbReference type="EMBL" id="AY177396">
    <property type="protein sequence ID" value="AAO60361.1"/>
    <property type="molecule type" value="mRNA"/>
</dbReference>
<dbReference type="EMBL" id="AY177397">
    <property type="protein sequence ID" value="AAO60362.1"/>
    <property type="molecule type" value="mRNA"/>
</dbReference>
<dbReference type="EMBL" id="AY177398">
    <property type="protein sequence ID" value="AAO60363.1"/>
    <property type="molecule type" value="mRNA"/>
</dbReference>
<dbReference type="EMBL" id="BX537406">
    <property type="protein sequence ID" value="CAD97648.1"/>
    <property type="molecule type" value="mRNA"/>
</dbReference>
<dbReference type="EMBL" id="AC008167">
    <property type="protein sequence ID" value="AAS07532.1"/>
    <property type="molecule type" value="Genomic_DNA"/>
</dbReference>
<dbReference type="EMBL" id="BC000787">
    <property type="protein sequence ID" value="AAH00787.2"/>
    <property type="molecule type" value="mRNA"/>
</dbReference>
<dbReference type="EMBL" id="BC063825">
    <property type="protein sequence ID" value="AAH63825.1"/>
    <property type="molecule type" value="mRNA"/>
</dbReference>
<dbReference type="EMBL" id="AK000916">
    <property type="protein sequence ID" value="BAA91422.1"/>
    <property type="status" value="ALT_INIT"/>
    <property type="molecule type" value="mRNA"/>
</dbReference>
<dbReference type="EMBL" id="AF228527">
    <property type="protein sequence ID" value="AAF36723.1"/>
    <property type="molecule type" value="mRNA"/>
</dbReference>
<dbReference type="CCDS" id="CCDS34594.1">
    <molecule id="Q9NWF9-1"/>
</dbReference>
<dbReference type="CCDS" id="CCDS34595.1">
    <molecule id="Q9NWF9-2"/>
</dbReference>
<dbReference type="RefSeq" id="NP_001364085.1">
    <molecule id="Q9NWF9-2"/>
    <property type="nucleotide sequence ID" value="NM_001377156.1"/>
</dbReference>
<dbReference type="RefSeq" id="NP_996994.1">
    <molecule id="Q9NWF9-1"/>
    <property type="nucleotide sequence ID" value="NM_207111.4"/>
</dbReference>
<dbReference type="RefSeq" id="NP_996999.1">
    <molecule id="Q9NWF9-2"/>
    <property type="nucleotide sequence ID" value="NM_207116.3"/>
</dbReference>
<dbReference type="RefSeq" id="XP_005249842.1">
    <molecule id="Q9NWF9-1"/>
    <property type="nucleotide sequence ID" value="XM_005249785.3"/>
</dbReference>
<dbReference type="RefSeq" id="XP_011513738.1">
    <property type="nucleotide sequence ID" value="XM_011515436.1"/>
</dbReference>
<dbReference type="RefSeq" id="XP_016867852.1">
    <property type="nucleotide sequence ID" value="XM_017012363.1"/>
</dbReference>
<dbReference type="RefSeq" id="XP_016867854.1">
    <property type="nucleotide sequence ID" value="XM_017012365.1"/>
</dbReference>
<dbReference type="RefSeq" id="XP_047276480.1">
    <molecule id="Q9NWF9-1"/>
    <property type="nucleotide sequence ID" value="XM_047420524.1"/>
</dbReference>
<dbReference type="RefSeq" id="XP_047276481.1">
    <molecule id="Q9NWF9-1"/>
    <property type="nucleotide sequence ID" value="XM_047420525.1"/>
</dbReference>
<dbReference type="RefSeq" id="XP_047276482.1">
    <molecule id="Q9NWF9-2"/>
    <property type="nucleotide sequence ID" value="XM_047420526.1"/>
</dbReference>
<dbReference type="RefSeq" id="XP_047276485.1">
    <molecule id="Q9NWF9-3"/>
    <property type="nucleotide sequence ID" value="XM_047420529.1"/>
</dbReference>
<dbReference type="RefSeq" id="XP_054214467.1">
    <molecule id="Q9NWF9-1"/>
    <property type="nucleotide sequence ID" value="XM_054358492.1"/>
</dbReference>
<dbReference type="RefSeq" id="XP_054214468.1">
    <molecule id="Q9NWF9-1"/>
    <property type="nucleotide sequence ID" value="XM_054358493.1"/>
</dbReference>
<dbReference type="RefSeq" id="XP_054214469.1">
    <molecule id="Q9NWF9-1"/>
    <property type="nucleotide sequence ID" value="XM_054358494.1"/>
</dbReference>
<dbReference type="RefSeq" id="XP_054214470.1">
    <molecule id="Q9NWF9-1"/>
    <property type="nucleotide sequence ID" value="XM_054358495.1"/>
</dbReference>
<dbReference type="RefSeq" id="XP_054214471.1">
    <molecule id="Q9NWF9-2"/>
    <property type="nucleotide sequence ID" value="XM_054358496.1"/>
</dbReference>
<dbReference type="RefSeq" id="XP_054214474.1">
    <molecule id="Q9NWF9-3"/>
    <property type="nucleotide sequence ID" value="XM_054358499.1"/>
</dbReference>
<dbReference type="PDB" id="7M4M">
    <property type="method" value="X-ray"/>
    <property type="resolution" value="2.39 A"/>
    <property type="chains" value="A/B=510-784"/>
</dbReference>
<dbReference type="PDB" id="7M4N">
    <property type="method" value="X-ray"/>
    <property type="resolution" value="2.52 A"/>
    <property type="chains" value="A/B=649-784"/>
</dbReference>
<dbReference type="PDB" id="7M4O">
    <property type="method" value="X-ray"/>
    <property type="resolution" value="2.21 A"/>
    <property type="chains" value="A=649-784"/>
</dbReference>
<dbReference type="PDB" id="8EB0">
    <property type="method" value="X-ray"/>
    <property type="resolution" value="3.03 A"/>
    <property type="chains" value="A=510-784"/>
</dbReference>
<dbReference type="PDBsum" id="7M4M"/>
<dbReference type="PDBsum" id="7M4N"/>
<dbReference type="PDBsum" id="7M4O"/>
<dbReference type="PDBsum" id="8EB0"/>
<dbReference type="SMR" id="Q9NWF9"/>
<dbReference type="BioGRID" id="119981">
    <property type="interactions" value="55"/>
</dbReference>
<dbReference type="FunCoup" id="Q9NWF9">
    <property type="interactions" value="3823"/>
</dbReference>
<dbReference type="IntAct" id="Q9NWF9">
    <property type="interactions" value="25"/>
</dbReference>
<dbReference type="MINT" id="Q9NWF9"/>
<dbReference type="STRING" id="9606.ENSP00000374552"/>
<dbReference type="iPTMnet" id="Q9NWF9"/>
<dbReference type="PhosphoSitePlus" id="Q9NWF9"/>
<dbReference type="BioMuta" id="RNF216"/>
<dbReference type="DMDM" id="57015417"/>
<dbReference type="jPOST" id="Q9NWF9"/>
<dbReference type="MassIVE" id="Q9NWF9"/>
<dbReference type="PaxDb" id="9606-ENSP00000374552"/>
<dbReference type="PeptideAtlas" id="Q9NWF9"/>
<dbReference type="ProteomicsDB" id="82933">
    <molecule id="Q9NWF9-2"/>
</dbReference>
<dbReference type="ProteomicsDB" id="82934">
    <molecule id="Q9NWF9-1"/>
</dbReference>
<dbReference type="ProteomicsDB" id="82935">
    <molecule id="Q9NWF9-3"/>
</dbReference>
<dbReference type="Pumba" id="Q9NWF9"/>
<dbReference type="Antibodypedia" id="11455">
    <property type="antibodies" value="206 antibodies from 28 providers"/>
</dbReference>
<dbReference type="DNASU" id="54476"/>
<dbReference type="Ensembl" id="ENST00000389902.8">
    <molecule id="Q9NWF9-1"/>
    <property type="protein sequence ID" value="ENSP00000374552.3"/>
    <property type="gene ID" value="ENSG00000011275.19"/>
</dbReference>
<dbReference type="Ensembl" id="ENST00000425013.6">
    <molecule id="Q9NWF9-2"/>
    <property type="protein sequence ID" value="ENSP00000404602.2"/>
    <property type="gene ID" value="ENSG00000011275.19"/>
</dbReference>
<dbReference type="GeneID" id="54476"/>
<dbReference type="KEGG" id="hsa:54476"/>
<dbReference type="MANE-Select" id="ENST00000389902.8">
    <molecule id="Q9NWF9-1"/>
    <property type="protein sequence ID" value="ENSP00000374552.3"/>
    <property type="RefSeq nucleotide sequence ID" value="NM_207111.4"/>
    <property type="RefSeq protein sequence ID" value="NP_996994.1"/>
</dbReference>
<dbReference type="UCSC" id="uc003sox.3">
    <molecule id="Q9NWF9-2"/>
    <property type="organism name" value="human"/>
</dbReference>
<dbReference type="AGR" id="HGNC:21698"/>
<dbReference type="CTD" id="54476"/>
<dbReference type="DisGeNET" id="54476"/>
<dbReference type="GeneCards" id="RNF216"/>
<dbReference type="HGNC" id="HGNC:21698">
    <property type="gene designation" value="RNF216"/>
</dbReference>
<dbReference type="HPA" id="ENSG00000011275">
    <property type="expression patterns" value="Low tissue specificity"/>
</dbReference>
<dbReference type="MalaCards" id="RNF216"/>
<dbReference type="MIM" id="212840">
    <property type="type" value="phenotype"/>
</dbReference>
<dbReference type="MIM" id="609948">
    <property type="type" value="gene"/>
</dbReference>
<dbReference type="neXtProt" id="NX_Q9NWF9"/>
<dbReference type="OpenTargets" id="ENSG00000011275"/>
<dbReference type="Orphanet" id="1173">
    <property type="disease" value="Cerebellar ataxia-hypogonadism syndrome"/>
</dbReference>
<dbReference type="PharmGKB" id="PA162401829"/>
<dbReference type="VEuPathDB" id="HostDB:ENSG00000011275"/>
<dbReference type="eggNOG" id="KOG1812">
    <property type="taxonomic scope" value="Eukaryota"/>
</dbReference>
<dbReference type="GeneTree" id="ENSGT00510000048032"/>
<dbReference type="HOGENOM" id="CLU_011576_1_0_1"/>
<dbReference type="InParanoid" id="Q9NWF9"/>
<dbReference type="OMA" id="WINHRDE"/>
<dbReference type="OrthoDB" id="10009520at2759"/>
<dbReference type="PAN-GO" id="Q9NWF9">
    <property type="GO annotations" value="0 GO annotations based on evolutionary models"/>
</dbReference>
<dbReference type="PhylomeDB" id="Q9NWF9"/>
<dbReference type="TreeFam" id="TF330852"/>
<dbReference type="PathwayCommons" id="Q9NWF9"/>
<dbReference type="Reactome" id="R-HSA-936440">
    <property type="pathway name" value="Negative regulators of DDX58/IFIH1 signaling"/>
</dbReference>
<dbReference type="SignaLink" id="Q9NWF9"/>
<dbReference type="SIGNOR" id="Q9NWF9"/>
<dbReference type="UniPathway" id="UPA00143"/>
<dbReference type="BioGRID-ORCS" id="54476">
    <property type="hits" value="20 hits in 1200 CRISPR screens"/>
</dbReference>
<dbReference type="ChiTaRS" id="RNF216">
    <property type="organism name" value="human"/>
</dbReference>
<dbReference type="GeneWiki" id="RNF216"/>
<dbReference type="GenomeRNAi" id="54476"/>
<dbReference type="Pharos" id="Q9NWF9">
    <property type="development level" value="Tbio"/>
</dbReference>
<dbReference type="PRO" id="PR:Q9NWF9"/>
<dbReference type="Proteomes" id="UP000005640">
    <property type="component" value="Chromosome 7"/>
</dbReference>
<dbReference type="RNAct" id="Q9NWF9">
    <property type="molecule type" value="protein"/>
</dbReference>
<dbReference type="Bgee" id="ENSG00000011275">
    <property type="expression patterns" value="Expressed in male germ line stem cell (sensu Vertebrata) in testis and 199 other cell types or tissues"/>
</dbReference>
<dbReference type="ExpressionAtlas" id="Q9NWF9">
    <property type="expression patterns" value="baseline and differential"/>
</dbReference>
<dbReference type="GO" id="GO:0030136">
    <property type="term" value="C:clathrin-coated vesicle"/>
    <property type="evidence" value="ECO:0007669"/>
    <property type="project" value="UniProtKB-SubCell"/>
</dbReference>
<dbReference type="GO" id="GO:0005829">
    <property type="term" value="C:cytosol"/>
    <property type="evidence" value="ECO:0000314"/>
    <property type="project" value="HPA"/>
</dbReference>
<dbReference type="GO" id="GO:0005654">
    <property type="term" value="C:nucleoplasm"/>
    <property type="evidence" value="ECO:0000314"/>
    <property type="project" value="HPA"/>
</dbReference>
<dbReference type="GO" id="GO:0005634">
    <property type="term" value="C:nucleus"/>
    <property type="evidence" value="ECO:0000314"/>
    <property type="project" value="LIFEdb"/>
</dbReference>
<dbReference type="GO" id="GO:0061630">
    <property type="term" value="F:ubiquitin protein ligase activity"/>
    <property type="evidence" value="ECO:0000269"/>
    <property type="project" value="Reactome"/>
</dbReference>
<dbReference type="GO" id="GO:0008270">
    <property type="term" value="F:zinc ion binding"/>
    <property type="evidence" value="ECO:0007669"/>
    <property type="project" value="UniProtKB-KW"/>
</dbReference>
<dbReference type="GO" id="GO:0006915">
    <property type="term" value="P:apoptotic process"/>
    <property type="evidence" value="ECO:0007669"/>
    <property type="project" value="UniProtKB-KW"/>
</dbReference>
<dbReference type="GO" id="GO:0032480">
    <property type="term" value="P:negative regulation of type I interferon production"/>
    <property type="evidence" value="ECO:0000304"/>
    <property type="project" value="Reactome"/>
</dbReference>
<dbReference type="GO" id="GO:0043161">
    <property type="term" value="P:proteasome-mediated ubiquitin-dependent protein catabolic process"/>
    <property type="evidence" value="ECO:0000314"/>
    <property type="project" value="UniProtKB"/>
</dbReference>
<dbReference type="GO" id="GO:0070936">
    <property type="term" value="P:protein K48-linked ubiquitination"/>
    <property type="evidence" value="ECO:0000314"/>
    <property type="project" value="UniProtKB"/>
</dbReference>
<dbReference type="GO" id="GO:0050691">
    <property type="term" value="P:regulation of defense response to virus by host"/>
    <property type="evidence" value="ECO:0000314"/>
    <property type="project" value="UniProtKB"/>
</dbReference>
<dbReference type="GO" id="GO:0032648">
    <property type="term" value="P:regulation of interferon-beta production"/>
    <property type="evidence" value="ECO:0000314"/>
    <property type="project" value="UniProtKB"/>
</dbReference>
<dbReference type="CDD" id="cd20339">
    <property type="entry name" value="BRcat_RBR_RNF216"/>
    <property type="match status" value="1"/>
</dbReference>
<dbReference type="CDD" id="cd20353">
    <property type="entry name" value="Rcat_RBR_RNF216"/>
    <property type="match status" value="1"/>
</dbReference>
<dbReference type="CDD" id="cd16630">
    <property type="entry name" value="RING-HC_RBR_RNF216"/>
    <property type="match status" value="1"/>
</dbReference>
<dbReference type="FunFam" id="1.20.120.1750:FF:000016">
    <property type="entry name" value="E3 ubiquitin-protein ligase RNF216 isoform X1"/>
    <property type="match status" value="1"/>
</dbReference>
<dbReference type="FunFam" id="3.30.40.10:FF:000249">
    <property type="entry name" value="E3 ubiquitin-protein ligase RNF216 isoform X1"/>
    <property type="match status" value="1"/>
</dbReference>
<dbReference type="Gene3D" id="1.20.120.1750">
    <property type="match status" value="1"/>
</dbReference>
<dbReference type="Gene3D" id="3.30.40.10">
    <property type="entry name" value="Zinc/RING finger domain, C3HC4 (zinc finger)"/>
    <property type="match status" value="1"/>
</dbReference>
<dbReference type="InterPro" id="IPR047545">
    <property type="entry name" value="BRcat_RBR_RNF216"/>
</dbReference>
<dbReference type="InterPro" id="IPR002867">
    <property type="entry name" value="IBR_dom"/>
</dbReference>
<dbReference type="InterPro" id="IPR051628">
    <property type="entry name" value="LUBAC_E3_Ligases"/>
</dbReference>
<dbReference type="InterPro" id="IPR047546">
    <property type="entry name" value="Rcat_RBR_RNF216"/>
</dbReference>
<dbReference type="InterPro" id="IPR047544">
    <property type="entry name" value="RING-HC_RBR_RNF216"/>
</dbReference>
<dbReference type="InterPro" id="IPR044066">
    <property type="entry name" value="TRIAD_supradom"/>
</dbReference>
<dbReference type="InterPro" id="IPR013083">
    <property type="entry name" value="Znf_RING/FYVE/PHD"/>
</dbReference>
<dbReference type="PANTHER" id="PTHR22770:SF47">
    <property type="entry name" value="E3 UBIQUITIN-PROTEIN LIGASE RNF216"/>
    <property type="match status" value="1"/>
</dbReference>
<dbReference type="PANTHER" id="PTHR22770">
    <property type="entry name" value="UBIQUITIN CONJUGATING ENZYME 7 INTERACTING PROTEIN-RELATED"/>
    <property type="match status" value="1"/>
</dbReference>
<dbReference type="SMART" id="SM00647">
    <property type="entry name" value="IBR"/>
    <property type="match status" value="2"/>
</dbReference>
<dbReference type="SUPFAM" id="SSF57850">
    <property type="entry name" value="RING/U-box"/>
    <property type="match status" value="3"/>
</dbReference>
<dbReference type="PROSITE" id="PS51873">
    <property type="entry name" value="TRIAD"/>
    <property type="match status" value="1"/>
</dbReference>
<evidence type="ECO:0000250" key="1"/>
<evidence type="ECO:0000250" key="2">
    <source>
        <dbReference type="UniProtKB" id="P58283"/>
    </source>
</evidence>
<evidence type="ECO:0000255" key="3"/>
<evidence type="ECO:0000255" key="4">
    <source>
        <dbReference type="PROSITE-ProRule" id="PRU01221"/>
    </source>
</evidence>
<evidence type="ECO:0000256" key="5">
    <source>
        <dbReference type="SAM" id="MobiDB-lite"/>
    </source>
</evidence>
<evidence type="ECO:0000269" key="6">
    <source>
    </source>
</evidence>
<evidence type="ECO:0000269" key="7">
    <source>
    </source>
</evidence>
<evidence type="ECO:0000269" key="8">
    <source>
    </source>
</evidence>
<evidence type="ECO:0000269" key="9">
    <source>
    </source>
</evidence>
<evidence type="ECO:0000269" key="10">
    <source>
    </source>
</evidence>
<evidence type="ECO:0000269" key="11">
    <source>
    </source>
</evidence>
<evidence type="ECO:0000269" key="12">
    <source>
    </source>
</evidence>
<evidence type="ECO:0000269" key="13">
    <source>
    </source>
</evidence>
<evidence type="ECO:0000303" key="14">
    <source>
    </source>
</evidence>
<evidence type="ECO:0000303" key="15">
    <source>
    </source>
</evidence>
<evidence type="ECO:0000305" key="16"/>
<evidence type="ECO:0007744" key="17">
    <source>
        <dbReference type="PDB" id="7M4M"/>
    </source>
</evidence>
<evidence type="ECO:0007744" key="18">
    <source>
        <dbReference type="PDB" id="7M4N"/>
    </source>
</evidence>
<evidence type="ECO:0007744" key="19">
    <source>
        <dbReference type="PDB" id="7M4O"/>
    </source>
</evidence>
<evidence type="ECO:0007744" key="20">
    <source>
        <dbReference type="PDB" id="8EB0"/>
    </source>
</evidence>
<evidence type="ECO:0007744" key="21">
    <source>
    </source>
</evidence>
<evidence type="ECO:0007744" key="22">
    <source>
    </source>
</evidence>
<evidence type="ECO:0007744" key="23">
    <source>
    </source>
</evidence>
<evidence type="ECO:0007744" key="24">
    <source>
    </source>
</evidence>
<evidence type="ECO:0007744" key="25">
    <source>
    </source>
</evidence>
<evidence type="ECO:0007829" key="26">
    <source>
        <dbReference type="PDB" id="7M4M"/>
    </source>
</evidence>
<evidence type="ECO:0007829" key="27">
    <source>
        <dbReference type="PDB" id="7M4O"/>
    </source>
</evidence>
<evidence type="ECO:0007829" key="28">
    <source>
        <dbReference type="PDB" id="8EB0"/>
    </source>
</evidence>
<accession>Q9NWF9</accession>
<accession>Q6Y691</accession>
<accession>Q75ML7</accession>
<accession>Q7Z2H7</accession>
<accession>Q7Z7C1</accession>
<accession>Q8NHW7</accession>
<accession>Q9NYT1</accession>
<feature type="chain" id="PRO_0000056293" description="E3 ubiquitin-protein ligase RNF216">
    <location>
        <begin position="1"/>
        <end position="866"/>
    </location>
</feature>
<feature type="zinc finger region" description="RING-type 1" evidence="4">
    <location>
        <begin position="515"/>
        <end position="564"/>
    </location>
</feature>
<feature type="zinc finger region" description="IBR-type" evidence="4">
    <location>
        <begin position="583"/>
        <end position="648"/>
    </location>
</feature>
<feature type="zinc finger region" description="RING-type 2; atypical" evidence="4">
    <location>
        <begin position="675"/>
        <end position="703"/>
    </location>
</feature>
<feature type="region of interest" description="Disordered" evidence="5">
    <location>
        <begin position="46"/>
        <end position="117"/>
    </location>
</feature>
<feature type="region of interest" description="Disordered" evidence="5">
    <location>
        <begin position="131"/>
        <end position="161"/>
    </location>
</feature>
<feature type="region of interest" description="Disordered" evidence="5">
    <location>
        <begin position="211"/>
        <end position="240"/>
    </location>
</feature>
<feature type="region of interest" description="TRIAD supradomain" evidence="4">
    <location>
        <begin position="511"/>
        <end position="728"/>
    </location>
</feature>
<feature type="coiled-coil region" evidence="3">
    <location>
        <begin position="475"/>
        <end position="491"/>
    </location>
</feature>
<feature type="coiled-coil region" evidence="3">
    <location>
        <begin position="737"/>
        <end position="763"/>
    </location>
</feature>
<feature type="compositionally biased region" description="Acidic residues" evidence="5">
    <location>
        <begin position="55"/>
        <end position="76"/>
    </location>
</feature>
<feature type="compositionally biased region" description="Polar residues" evidence="5">
    <location>
        <begin position="137"/>
        <end position="156"/>
    </location>
</feature>
<feature type="active site" evidence="4">
    <location>
        <position position="688"/>
    </location>
</feature>
<feature type="binding site" evidence="4">
    <location>
        <position position="515"/>
    </location>
    <ligand>
        <name>Zn(2+)</name>
        <dbReference type="ChEBI" id="CHEBI:29105"/>
        <label>1</label>
    </ligand>
</feature>
<feature type="binding site" evidence="4">
    <location>
        <position position="518"/>
    </location>
    <ligand>
        <name>Zn(2+)</name>
        <dbReference type="ChEBI" id="CHEBI:29105"/>
        <label>1</label>
    </ligand>
</feature>
<feature type="binding site" evidence="4">
    <location>
        <position position="537"/>
    </location>
    <ligand>
        <name>Zn(2+)</name>
        <dbReference type="ChEBI" id="CHEBI:29105"/>
        <label>1</label>
    </ligand>
</feature>
<feature type="binding site" evidence="4">
    <location>
        <position position="540"/>
    </location>
    <ligand>
        <name>Zn(2+)</name>
        <dbReference type="ChEBI" id="CHEBI:29105"/>
        <label>1</label>
    </ligand>
</feature>
<feature type="binding site" evidence="4">
    <location>
        <position position="605"/>
    </location>
    <ligand>
        <name>Zn(2+)</name>
        <dbReference type="ChEBI" id="CHEBI:29105"/>
        <label>2</label>
    </ligand>
</feature>
<feature type="binding site" evidence="4">
    <location>
        <position position="608"/>
    </location>
    <ligand>
        <name>Zn(2+)</name>
        <dbReference type="ChEBI" id="CHEBI:29105"/>
        <label>2</label>
    </ligand>
</feature>
<feature type="binding site" evidence="4">
    <location>
        <position position="623"/>
    </location>
    <ligand>
        <name>Zn(2+)</name>
        <dbReference type="ChEBI" id="CHEBI:29105"/>
        <label>2</label>
    </ligand>
</feature>
<feature type="binding site" evidence="4">
    <location>
        <position position="628"/>
    </location>
    <ligand>
        <name>Zn(2+)</name>
        <dbReference type="ChEBI" id="CHEBI:29105"/>
        <label>2</label>
    </ligand>
</feature>
<feature type="binding site" evidence="4">
    <location>
        <position position="633"/>
    </location>
    <ligand>
        <name>Zn(2+)</name>
        <dbReference type="ChEBI" id="CHEBI:29105"/>
        <label>3</label>
    </ligand>
</feature>
<feature type="binding site" evidence="4">
    <location>
        <position position="636"/>
    </location>
    <ligand>
        <name>Zn(2+)</name>
        <dbReference type="ChEBI" id="CHEBI:29105"/>
        <label>3</label>
    </ligand>
</feature>
<feature type="binding site" evidence="4">
    <location>
        <position position="643"/>
    </location>
    <ligand>
        <name>Zn(2+)</name>
        <dbReference type="ChEBI" id="CHEBI:29105"/>
        <label>3</label>
    </ligand>
</feature>
<feature type="binding site" evidence="4">
    <location>
        <position position="648"/>
    </location>
    <ligand>
        <name>Zn(2+)</name>
        <dbReference type="ChEBI" id="CHEBI:29105"/>
        <label>3</label>
    </ligand>
</feature>
<feature type="binding site" evidence="4">
    <location>
        <position position="675"/>
    </location>
    <ligand>
        <name>Zn(2+)</name>
        <dbReference type="ChEBI" id="CHEBI:29105"/>
        <label>4</label>
    </ligand>
</feature>
<feature type="binding site" evidence="4">
    <location>
        <position position="678"/>
    </location>
    <ligand>
        <name>Zn(2+)</name>
        <dbReference type="ChEBI" id="CHEBI:29105"/>
        <label>4</label>
    </ligand>
</feature>
<feature type="binding site" evidence="4">
    <location>
        <position position="693"/>
    </location>
    <ligand>
        <name>Zn(2+)</name>
        <dbReference type="ChEBI" id="CHEBI:29105"/>
        <label>4</label>
    </ligand>
</feature>
<feature type="binding site" evidence="4">
    <location>
        <position position="695"/>
    </location>
    <ligand>
        <name>Zn(2+)</name>
        <dbReference type="ChEBI" id="CHEBI:29105"/>
        <label>4</label>
    </ligand>
</feature>
<feature type="binding site" evidence="4">
    <location>
        <position position="700"/>
    </location>
    <ligand>
        <name>Zn(2+)</name>
        <dbReference type="ChEBI" id="CHEBI:29105"/>
        <label>5</label>
    </ligand>
</feature>
<feature type="binding site" evidence="4">
    <location>
        <position position="703"/>
    </location>
    <ligand>
        <name>Zn(2+)</name>
        <dbReference type="ChEBI" id="CHEBI:29105"/>
        <label>5</label>
    </ligand>
</feature>
<feature type="binding site" evidence="4">
    <location>
        <position position="716"/>
    </location>
    <ligand>
        <name>Zn(2+)</name>
        <dbReference type="ChEBI" id="CHEBI:29105"/>
        <label>5</label>
    </ligand>
</feature>
<feature type="binding site" evidence="4">
    <location>
        <position position="724"/>
    </location>
    <ligand>
        <name>Zn(2+)</name>
        <dbReference type="ChEBI" id="CHEBI:29105"/>
        <label>5</label>
    </ligand>
</feature>
<feature type="modified residue" description="Phosphoserine" evidence="21">
    <location>
        <position position="419"/>
    </location>
</feature>
<feature type="modified residue" description="Phosphoserine; by MAPK1" evidence="13">
    <location>
        <position position="719"/>
    </location>
</feature>
<feature type="cross-link" description="Glycyl lysine isopeptide (Lys-Gly) (interchain with G-Cter in SUMO2)" evidence="25">
    <location>
        <position position="100"/>
    </location>
</feature>
<feature type="cross-link" description="Glycyl lysine isopeptide (Lys-Gly) (interchain with G-Cter in SUMO2)" evidence="23 24 25">
    <location>
        <position position="351"/>
    </location>
</feature>
<feature type="cross-link" description="Glycyl lysine isopeptide (Lys-Gly) (interchain with G-Cter in SUMO2)" evidence="25">
    <location>
        <position position="354"/>
    </location>
</feature>
<feature type="cross-link" description="Glycyl lysine isopeptide (Lys-Gly) (interchain with G-Cter in SUMO2)" evidence="25">
    <location>
        <position position="425"/>
    </location>
</feature>
<feature type="cross-link" description="Glycyl lysine isopeptide (Lys-Gly) (interchain with G-Cter in SUMO2)" evidence="25">
    <location>
        <position position="430"/>
    </location>
</feature>
<feature type="cross-link" description="Glycyl lysine isopeptide (Lys-Gly) (interchain with G-Cter in SUMO2)" evidence="22 25">
    <location>
        <position position="448"/>
    </location>
</feature>
<feature type="cross-link" description="Glycyl lysine isopeptide (Lys-Gly) (interchain with G-Cter in SUMO2)" evidence="25">
    <location>
        <position position="459"/>
    </location>
</feature>
<feature type="cross-link" description="Glycyl lysine isopeptide (Lys-Gly) (interchain with G-Cter in SUMO2)" evidence="25">
    <location>
        <position position="485"/>
    </location>
</feature>
<feature type="cross-link" description="Glycyl lysine isopeptide (Lys-Gly) (interchain with G-Cter in SUMO2)" evidence="25">
    <location>
        <position position="619"/>
    </location>
</feature>
<feature type="cross-link" description="Glycyl lysine isopeptide (Lys-Gly) (interchain with G-Cter in SUMO2)" evidence="22 23 25">
    <location>
        <position position="658"/>
    </location>
</feature>
<feature type="cross-link" description="Glycyl lysine isopeptide (Lys-Gly) (interchain with G-Cter in SUMO2)" evidence="25">
    <location>
        <position position="666"/>
    </location>
</feature>
<feature type="cross-link" description="Glycyl lysine isopeptide (Lys-Gly) (interchain with G-Cter in SUMO2)" evidence="25">
    <location>
        <position position="765"/>
    </location>
</feature>
<feature type="cross-link" description="Glycyl lysine isopeptide (Lys-Gly) (interchain with G-Cter in SUMO2)" evidence="25">
    <location>
        <position position="773"/>
    </location>
</feature>
<feature type="splice variant" id="VSP_012443" description="In isoform 3." evidence="14 15">
    <location>
        <begin position="1"/>
        <end position="378"/>
    </location>
</feature>
<feature type="splice variant" id="VSP_012444" description="In isoform 2." evidence="15">
    <original>E</original>
    <variation>ETNKPQRSRPNLIKPAAQWQDLKRLGEERPKKSRAAFESDKSSYFSVCNNPLFDSGAQ</variation>
    <location>
        <position position="67"/>
    </location>
</feature>
<feature type="sequence variant" id="VAR_070048" description="In GDHS; dbSNP:rs1335215379." evidence="10">
    <original>R</original>
    <variation>C</variation>
    <location>
        <position position="660"/>
    </location>
</feature>
<feature type="sequence variant" id="VAR_070049" description="In GDHS; dbSNP:rs387907368." evidence="10">
    <original>R</original>
    <variation>C</variation>
    <location>
        <position position="694"/>
    </location>
</feature>
<feature type="mutagenesis site" description="Abrogates ubiquitin chain formation activity." evidence="13">
    <original>E</original>
    <variation>A</variation>
    <location>
        <position position="664"/>
    </location>
</feature>
<feature type="mutagenesis site" description="Abrogates ubiquitin chain formation activity." evidence="13">
    <original>I</original>
    <variation>A</variation>
    <location>
        <position position="672"/>
    </location>
</feature>
<feature type="mutagenesis site" description="Abrogates ubiquitin chain formation activity." evidence="13">
    <original>I</original>
    <variation>A</variation>
    <location>
        <position position="683"/>
    </location>
</feature>
<feature type="mutagenesis site" description="Mild reduced activity." evidence="13">
    <original>S</original>
    <variation>A</variation>
    <location>
        <position position="719"/>
    </location>
</feature>
<feature type="sequence conflict" description="In Ref. 1; AAL38043." evidence="16" ref="1">
    <original>L</original>
    <variation>F</variation>
    <location>
        <position position="408"/>
    </location>
</feature>
<feature type="turn" evidence="28">
    <location>
        <begin position="516"/>
        <end position="518"/>
    </location>
</feature>
<feature type="helix" evidence="28">
    <location>
        <begin position="524"/>
        <end position="526"/>
    </location>
</feature>
<feature type="strand" evidence="28">
    <location>
        <begin position="527"/>
        <end position="529"/>
    </location>
</feature>
<feature type="strand" evidence="28">
    <location>
        <begin position="535"/>
        <end position="537"/>
    </location>
</feature>
<feature type="helix" evidence="28">
    <location>
        <begin position="538"/>
        <end position="549"/>
    </location>
</feature>
<feature type="strand" evidence="28">
    <location>
        <begin position="550"/>
        <end position="553"/>
    </location>
</feature>
<feature type="helix" evidence="28">
    <location>
        <begin position="570"/>
        <end position="576"/>
    </location>
</feature>
<feature type="helix" evidence="28">
    <location>
        <begin position="579"/>
        <end position="598"/>
    </location>
</feature>
<feature type="strand" evidence="26">
    <location>
        <begin position="601"/>
        <end position="604"/>
    </location>
</feature>
<feature type="turn" evidence="26">
    <location>
        <begin position="606"/>
        <end position="608"/>
    </location>
</feature>
<feature type="strand" evidence="26">
    <location>
        <begin position="611"/>
        <end position="614"/>
    </location>
</feature>
<feature type="strand" evidence="26">
    <location>
        <begin position="620"/>
        <end position="622"/>
    </location>
</feature>
<feature type="turn" evidence="26">
    <location>
        <begin position="626"/>
        <end position="628"/>
    </location>
</feature>
<feature type="strand" evidence="26">
    <location>
        <begin position="631"/>
        <end position="636"/>
    </location>
</feature>
<feature type="helix" evidence="26">
    <location>
        <begin position="641"/>
        <end position="643"/>
    </location>
</feature>
<feature type="helix" evidence="27">
    <location>
        <begin position="653"/>
        <end position="671"/>
    </location>
</feature>
<feature type="turn" evidence="27">
    <location>
        <begin position="676"/>
        <end position="678"/>
    </location>
</feature>
<feature type="strand" evidence="27">
    <location>
        <begin position="681"/>
        <end position="687"/>
    </location>
</feature>
<feature type="strand" evidence="27">
    <location>
        <begin position="689"/>
        <end position="692"/>
    </location>
</feature>
<feature type="strand" evidence="27">
    <location>
        <begin position="698"/>
        <end position="700"/>
    </location>
</feature>
<feature type="turn" evidence="27">
    <location>
        <begin position="701"/>
        <end position="703"/>
    </location>
</feature>
<feature type="strand" evidence="27">
    <location>
        <begin position="706"/>
        <end position="709"/>
    </location>
</feature>
<feature type="helix" evidence="27">
    <location>
        <begin position="710"/>
        <end position="712"/>
    </location>
</feature>
<feature type="strand" evidence="27">
    <location>
        <begin position="730"/>
        <end position="733"/>
    </location>
</feature>
<feature type="helix" evidence="27">
    <location>
        <begin position="737"/>
        <end position="758"/>
    </location>
</feature>
<feature type="strand" evidence="26">
    <location>
        <begin position="760"/>
        <end position="762"/>
    </location>
</feature>
<feature type="cross-link" description="Glycyl lysine isopeptide (Lys-Gly) (interchain with G-Cter in SUMO2)" evidence="25">
    <location sequence="Q9NWF9-1">
        <position position="80"/>
    </location>
</feature>
<feature type="cross-link" description="Glycyl lysine isopeptide (Lys-Gly) (interchain with G-Cter in SUMO2)" evidence="25">
    <location sequence="Q9NWF9-1">
        <position position="89"/>
    </location>
</feature>
<name>RN216_HUMAN</name>
<gene>
    <name type="primary">RNF216</name>
    <name type="synonym">TRIAD3</name>
    <name type="synonym">UBCE7IP1</name>
    <name type="synonym">ZIN</name>
</gene>
<reference key="1">
    <citation type="journal article" date="2002" name="J. Biol. Chem.">
        <title>A novel zinc finger protein interacts with receptor-interacting protein (RIP) and inhibits tumor necrosis factor (TNF)- and IL1-induced NF-kappa B activation.</title>
        <authorList>
            <person name="Chen D."/>
            <person name="Li X."/>
            <person name="Zhai Z."/>
            <person name="Shu H.-B."/>
        </authorList>
    </citation>
    <scope>NUCLEOTIDE SEQUENCE [MRNA] (ISOFORM 3)</scope>
    <scope>INTERACTION WITH RIPK1</scope>
    <scope>FUNCTION (ISOFORM 3)</scope>
</reference>
<reference key="2">
    <citation type="journal article" date="2004" name="Nat. Immunol.">
        <title>Triad3A, an E3 ubiquitin-protein ligase regulating Toll-like receptors.</title>
        <authorList>
            <person name="Chuang T.-H."/>
            <person name="Ulevitch R.J."/>
        </authorList>
    </citation>
    <scope>NUCLEOTIDE SEQUENCE [MRNA] (ISOFORMS 1; 2 AND 3)</scope>
    <scope>FUNCTION</scope>
    <scope>INTERACTION WITH TLR3; TLR4; TLR5 AND TLR9</scope>
    <source>
        <tissue>Placenta</tissue>
    </source>
</reference>
<reference key="3">
    <citation type="journal article" date="2007" name="BMC Genomics">
        <title>The full-ORF clone resource of the German cDNA consortium.</title>
        <authorList>
            <person name="Bechtel S."/>
            <person name="Rosenfelder H."/>
            <person name="Duda A."/>
            <person name="Schmidt C.P."/>
            <person name="Ernst U."/>
            <person name="Wellenreuther R."/>
            <person name="Mehrle A."/>
            <person name="Schuster C."/>
            <person name="Bahr A."/>
            <person name="Bloecker H."/>
            <person name="Heubner D."/>
            <person name="Hoerlein A."/>
            <person name="Michel G."/>
            <person name="Wedler H."/>
            <person name="Koehrer K."/>
            <person name="Ottenwaelder B."/>
            <person name="Poustka A."/>
            <person name="Wiemann S."/>
            <person name="Schupp I."/>
        </authorList>
    </citation>
    <scope>NUCLEOTIDE SEQUENCE [LARGE SCALE MRNA] (ISOFORM 1)</scope>
    <source>
        <tissue>Endometrium</tissue>
    </source>
</reference>
<reference key="4">
    <citation type="journal article" date="2003" name="Nature">
        <title>The DNA sequence of human chromosome 7.</title>
        <authorList>
            <person name="Hillier L.W."/>
            <person name="Fulton R.S."/>
            <person name="Fulton L.A."/>
            <person name="Graves T.A."/>
            <person name="Pepin K.H."/>
            <person name="Wagner-McPherson C."/>
            <person name="Layman D."/>
            <person name="Maas J."/>
            <person name="Jaeger S."/>
            <person name="Walker R."/>
            <person name="Wylie K."/>
            <person name="Sekhon M."/>
            <person name="Becker M.C."/>
            <person name="O'Laughlin M.D."/>
            <person name="Schaller M.E."/>
            <person name="Fewell G.A."/>
            <person name="Delehaunty K.D."/>
            <person name="Miner T.L."/>
            <person name="Nash W.E."/>
            <person name="Cordes M."/>
            <person name="Du H."/>
            <person name="Sun H."/>
            <person name="Edwards J."/>
            <person name="Bradshaw-Cordum H."/>
            <person name="Ali J."/>
            <person name="Andrews S."/>
            <person name="Isak A."/>
            <person name="Vanbrunt A."/>
            <person name="Nguyen C."/>
            <person name="Du F."/>
            <person name="Lamar B."/>
            <person name="Courtney L."/>
            <person name="Kalicki J."/>
            <person name="Ozersky P."/>
            <person name="Bielicki L."/>
            <person name="Scott K."/>
            <person name="Holmes A."/>
            <person name="Harkins R."/>
            <person name="Harris A."/>
            <person name="Strong C.M."/>
            <person name="Hou S."/>
            <person name="Tomlinson C."/>
            <person name="Dauphin-Kohlberg S."/>
            <person name="Kozlowicz-Reilly A."/>
            <person name="Leonard S."/>
            <person name="Rohlfing T."/>
            <person name="Rock S.M."/>
            <person name="Tin-Wollam A.-M."/>
            <person name="Abbott A."/>
            <person name="Minx P."/>
            <person name="Maupin R."/>
            <person name="Strowmatt C."/>
            <person name="Latreille P."/>
            <person name="Miller N."/>
            <person name="Johnson D."/>
            <person name="Murray J."/>
            <person name="Woessner J.P."/>
            <person name="Wendl M.C."/>
            <person name="Yang S.-P."/>
            <person name="Schultz B.R."/>
            <person name="Wallis J.W."/>
            <person name="Spieth J."/>
            <person name="Bieri T.A."/>
            <person name="Nelson J.O."/>
            <person name="Berkowicz N."/>
            <person name="Wohldmann P.E."/>
            <person name="Cook L.L."/>
            <person name="Hickenbotham M.T."/>
            <person name="Eldred J."/>
            <person name="Williams D."/>
            <person name="Bedell J.A."/>
            <person name="Mardis E.R."/>
            <person name="Clifton S.W."/>
            <person name="Chissoe S.L."/>
            <person name="Marra M.A."/>
            <person name="Raymond C."/>
            <person name="Haugen E."/>
            <person name="Gillett W."/>
            <person name="Zhou Y."/>
            <person name="James R."/>
            <person name="Phelps K."/>
            <person name="Iadanoto S."/>
            <person name="Bubb K."/>
            <person name="Simms E."/>
            <person name="Levy R."/>
            <person name="Clendenning J."/>
            <person name="Kaul R."/>
            <person name="Kent W.J."/>
            <person name="Furey T.S."/>
            <person name="Baertsch R.A."/>
            <person name="Brent M.R."/>
            <person name="Keibler E."/>
            <person name="Flicek P."/>
            <person name="Bork P."/>
            <person name="Suyama M."/>
            <person name="Bailey J.A."/>
            <person name="Portnoy M.E."/>
            <person name="Torrents D."/>
            <person name="Chinwalla A.T."/>
            <person name="Gish W.R."/>
            <person name="Eddy S.R."/>
            <person name="McPherson J.D."/>
            <person name="Olson M.V."/>
            <person name="Eichler E.E."/>
            <person name="Green E.D."/>
            <person name="Waterston R.H."/>
            <person name="Wilson R.K."/>
        </authorList>
    </citation>
    <scope>NUCLEOTIDE SEQUENCE [LARGE SCALE GENOMIC DNA]</scope>
</reference>
<reference key="5">
    <citation type="journal article" date="2004" name="Genome Res.">
        <title>The status, quality, and expansion of the NIH full-length cDNA project: the Mammalian Gene Collection (MGC).</title>
        <authorList>
            <consortium name="The MGC Project Team"/>
        </authorList>
    </citation>
    <scope>NUCLEOTIDE SEQUENCE [LARGE SCALE MRNA] (ISOFORM 1)</scope>
    <source>
        <tissue>Kidney</tissue>
        <tissue>Uterus</tissue>
    </source>
</reference>
<reference key="6">
    <citation type="journal article" date="2004" name="Nat. Genet.">
        <title>Complete sequencing and characterization of 21,243 full-length human cDNAs.</title>
        <authorList>
            <person name="Ota T."/>
            <person name="Suzuki Y."/>
            <person name="Nishikawa T."/>
            <person name="Otsuki T."/>
            <person name="Sugiyama T."/>
            <person name="Irie R."/>
            <person name="Wakamatsu A."/>
            <person name="Hayashi K."/>
            <person name="Sato H."/>
            <person name="Nagai K."/>
            <person name="Kimura K."/>
            <person name="Makita H."/>
            <person name="Sekine M."/>
            <person name="Obayashi M."/>
            <person name="Nishi T."/>
            <person name="Shibahara T."/>
            <person name="Tanaka T."/>
            <person name="Ishii S."/>
            <person name="Yamamoto J."/>
            <person name="Saito K."/>
            <person name="Kawai Y."/>
            <person name="Isono Y."/>
            <person name="Nakamura Y."/>
            <person name="Nagahari K."/>
            <person name="Murakami K."/>
            <person name="Yasuda T."/>
            <person name="Iwayanagi T."/>
            <person name="Wagatsuma M."/>
            <person name="Shiratori A."/>
            <person name="Sudo H."/>
            <person name="Hosoiri T."/>
            <person name="Kaku Y."/>
            <person name="Kodaira H."/>
            <person name="Kondo H."/>
            <person name="Sugawara M."/>
            <person name="Takahashi M."/>
            <person name="Kanda K."/>
            <person name="Yokoi T."/>
            <person name="Furuya T."/>
            <person name="Kikkawa E."/>
            <person name="Omura Y."/>
            <person name="Abe K."/>
            <person name="Kamihara K."/>
            <person name="Katsuta N."/>
            <person name="Sato K."/>
            <person name="Tanikawa M."/>
            <person name="Yamazaki M."/>
            <person name="Ninomiya K."/>
            <person name="Ishibashi T."/>
            <person name="Yamashita H."/>
            <person name="Murakawa K."/>
            <person name="Fujimori K."/>
            <person name="Tanai H."/>
            <person name="Kimata M."/>
            <person name="Watanabe M."/>
            <person name="Hiraoka S."/>
            <person name="Chiba Y."/>
            <person name="Ishida S."/>
            <person name="Ono Y."/>
            <person name="Takiguchi S."/>
            <person name="Watanabe S."/>
            <person name="Yosida M."/>
            <person name="Hotuta T."/>
            <person name="Kusano J."/>
            <person name="Kanehori K."/>
            <person name="Takahashi-Fujii A."/>
            <person name="Hara H."/>
            <person name="Tanase T.-O."/>
            <person name="Nomura Y."/>
            <person name="Togiya S."/>
            <person name="Komai F."/>
            <person name="Hara R."/>
            <person name="Takeuchi K."/>
            <person name="Arita M."/>
            <person name="Imose N."/>
            <person name="Musashino K."/>
            <person name="Yuuki H."/>
            <person name="Oshima A."/>
            <person name="Sasaki N."/>
            <person name="Aotsuka S."/>
            <person name="Yoshikawa Y."/>
            <person name="Matsunawa H."/>
            <person name="Ichihara T."/>
            <person name="Shiohata N."/>
            <person name="Sano S."/>
            <person name="Moriya S."/>
            <person name="Momiyama H."/>
            <person name="Satoh N."/>
            <person name="Takami S."/>
            <person name="Terashima Y."/>
            <person name="Suzuki O."/>
            <person name="Nakagawa S."/>
            <person name="Senoh A."/>
            <person name="Mizoguchi H."/>
            <person name="Goto Y."/>
            <person name="Shimizu F."/>
            <person name="Wakebe H."/>
            <person name="Hishigaki H."/>
            <person name="Watanabe T."/>
            <person name="Sugiyama A."/>
            <person name="Takemoto M."/>
            <person name="Kawakami B."/>
            <person name="Yamazaki M."/>
            <person name="Watanabe K."/>
            <person name="Kumagai A."/>
            <person name="Itakura S."/>
            <person name="Fukuzumi Y."/>
            <person name="Fujimori Y."/>
            <person name="Komiyama M."/>
            <person name="Tashiro H."/>
            <person name="Tanigami A."/>
            <person name="Fujiwara T."/>
            <person name="Ono T."/>
            <person name="Yamada K."/>
            <person name="Fujii Y."/>
            <person name="Ozaki K."/>
            <person name="Hirao M."/>
            <person name="Ohmori Y."/>
            <person name="Kawabata A."/>
            <person name="Hikiji T."/>
            <person name="Kobatake N."/>
            <person name="Inagaki H."/>
            <person name="Ikema Y."/>
            <person name="Okamoto S."/>
            <person name="Okitani R."/>
            <person name="Kawakami T."/>
            <person name="Noguchi S."/>
            <person name="Itoh T."/>
            <person name="Shigeta K."/>
            <person name="Senba T."/>
            <person name="Matsumura K."/>
            <person name="Nakajima Y."/>
            <person name="Mizuno T."/>
            <person name="Morinaga M."/>
            <person name="Sasaki M."/>
            <person name="Togashi T."/>
            <person name="Oyama M."/>
            <person name="Hata H."/>
            <person name="Watanabe M."/>
            <person name="Komatsu T."/>
            <person name="Mizushima-Sugano J."/>
            <person name="Satoh T."/>
            <person name="Shirai Y."/>
            <person name="Takahashi Y."/>
            <person name="Nakagawa K."/>
            <person name="Okumura K."/>
            <person name="Nagase T."/>
            <person name="Nomura N."/>
            <person name="Kikuchi H."/>
            <person name="Masuho Y."/>
            <person name="Yamashita R."/>
            <person name="Nakai K."/>
            <person name="Yada T."/>
            <person name="Nakamura Y."/>
            <person name="Ohara O."/>
            <person name="Isogai T."/>
            <person name="Sugano S."/>
        </authorList>
    </citation>
    <scope>NUCLEOTIDE SEQUENCE [LARGE SCALE MRNA] OF 450-866 (ISOFORMS 1/2/3)</scope>
    <source>
        <tissue>Embryo</tissue>
    </source>
</reference>
<reference key="7">
    <citation type="submission" date="2000-01" db="EMBL/GenBank/DDBJ databases">
        <title>Identification of a novel TRIAD protein, TRIAD3.</title>
        <authorList>
            <person name="van der Reijden B.A."/>
            <person name="Jansen J.H."/>
        </authorList>
    </citation>
    <scope>NUCLEOTIDE SEQUENCE [MRNA] OF 509-866 (ISOFORMS 1/2/3)</scope>
</reference>
<reference key="8">
    <citation type="journal article" date="2004" name="J. Virol.">
        <title>Ring finger protein ZIN interacts with human immunodeficiency virus type 1 Vif.</title>
        <authorList>
            <person name="Feng F."/>
            <person name="Davis A."/>
            <person name="Lake J.A."/>
            <person name="Carr J."/>
            <person name="Xia W."/>
            <person name="Burrell C."/>
            <person name="Li P."/>
        </authorList>
    </citation>
    <scope>INTERACTION WITH HIV VIF PROTEIN (ISOFORM 3) (MICROBIAL INFECTION)</scope>
</reference>
<reference key="9">
    <citation type="journal article" date="2009" name="PLoS Pathog.">
        <title>The E3 ubiquitin ligase Triad3A negatively regulates the RIG-I/MAVS signaling pathway by targeting TRAF3 for degradation.</title>
        <authorList>
            <person name="Nakhaei P."/>
            <person name="Mesplede T."/>
            <person name="Solis M."/>
            <person name="Sun Q."/>
            <person name="Zhao T."/>
            <person name="Yang L."/>
            <person name="Chuang T.H."/>
            <person name="Ware C.F."/>
            <person name="Lin R."/>
            <person name="Hiscott J."/>
        </authorList>
    </citation>
    <scope>FUNCTION</scope>
    <scope>INTERACTION WITH TRAF3</scope>
</reference>
<reference key="10">
    <citation type="journal article" date="2013" name="J. Proteome Res.">
        <title>Toward a comprehensive characterization of a human cancer cell phosphoproteome.</title>
        <authorList>
            <person name="Zhou H."/>
            <person name="Di Palma S."/>
            <person name="Preisinger C."/>
            <person name="Peng M."/>
            <person name="Polat A.N."/>
            <person name="Heck A.J."/>
            <person name="Mohammed S."/>
        </authorList>
    </citation>
    <scope>PHOSPHORYLATION [LARGE SCALE ANALYSIS] AT SER-419</scope>
    <scope>IDENTIFICATION BY MASS SPECTROMETRY [LARGE SCALE ANALYSIS]</scope>
    <source>
        <tissue>Cervix carcinoma</tissue>
        <tissue>Erythroleukemia</tissue>
    </source>
</reference>
<reference key="11">
    <citation type="journal article" date="2014" name="Neuron">
        <title>Triad3A regulates synaptic strength by ubiquitination of Arc.</title>
        <authorList>
            <person name="Mabb A.M."/>
            <person name="Je H.S."/>
            <person name="Wall M.J."/>
            <person name="Robinson C.G."/>
            <person name="Larsen R.S."/>
            <person name="Qiang Y."/>
            <person name="Correa S.A."/>
            <person name="Ehlers M.D."/>
        </authorList>
    </citation>
    <scope>FUNCTION</scope>
    <scope>SUBCELLULAR LOCATION</scope>
    <scope>CATALYTIC ACTIVITY</scope>
</reference>
<reference key="12">
    <citation type="journal article" date="2014" name="Autophagy">
        <title>Regulation of autophagy by E3 ubiquitin ligase RNF216 through BECN1 ubiquitination.</title>
        <authorList>
            <person name="Xu C."/>
            <person name="Feng K."/>
            <person name="Zhao X."/>
            <person name="Huang S."/>
            <person name="Cheng Y."/>
            <person name="Qian L."/>
            <person name="Wang Y."/>
            <person name="Sun H."/>
            <person name="Jin M."/>
            <person name="Chuang T.H."/>
            <person name="Zhang Y."/>
        </authorList>
    </citation>
    <scope>FUNCTION</scope>
</reference>
<reference key="13">
    <citation type="journal article" date="2014" name="Nat. Struct. Mol. Biol.">
        <title>Uncovering global SUMOylation signaling networks in a site-specific manner.</title>
        <authorList>
            <person name="Hendriks I.A."/>
            <person name="D'Souza R.C."/>
            <person name="Yang B."/>
            <person name="Verlaan-de Vries M."/>
            <person name="Mann M."/>
            <person name="Vertegaal A.C."/>
        </authorList>
    </citation>
    <scope>SUMOYLATION [LARGE SCALE ANALYSIS] AT LYS-448 AND LYS-658</scope>
    <scope>IDENTIFICATION BY MASS SPECTROMETRY [LARGE SCALE ANALYSIS]</scope>
</reference>
<reference key="14">
    <citation type="journal article" date="2015" name="Cell Rep.">
        <title>SUMO-2 orchestrates chromatin modifiers in response to DNA damage.</title>
        <authorList>
            <person name="Hendriks I.A."/>
            <person name="Treffers L.W."/>
            <person name="Verlaan-de Vries M."/>
            <person name="Olsen J.V."/>
            <person name="Vertegaal A.C."/>
        </authorList>
    </citation>
    <scope>SUMOYLATION [LARGE SCALE ANALYSIS] AT LYS-351</scope>
    <scope>IDENTIFICATION BY MASS SPECTROMETRY [LARGE SCALE ANALYSIS]</scope>
</reference>
<reference key="15">
    <citation type="journal article" date="2015" name="Mol. Cell. Proteomics">
        <title>System-wide analysis of SUMOylation dynamics in response to replication stress reveals novel small ubiquitin-like modified target proteins and acceptor lysines relevant for genome stability.</title>
        <authorList>
            <person name="Xiao Z."/>
            <person name="Chang J.G."/>
            <person name="Hendriks I.A."/>
            <person name="Sigurdsson J.O."/>
            <person name="Olsen J.V."/>
            <person name="Vertegaal A.C."/>
        </authorList>
    </citation>
    <scope>SUMOYLATION [LARGE SCALE ANALYSIS] AT LYS-351 AND LYS-658</scope>
    <scope>IDENTIFICATION BY MASS SPECTROMETRY [LARGE SCALE ANALYSIS]</scope>
</reference>
<reference key="16">
    <citation type="journal article" date="2017" name="Nat. Struct. Mol. Biol.">
        <title>Site-specific mapping of the human SUMO proteome reveals co-modification with phosphorylation.</title>
        <authorList>
            <person name="Hendriks I.A."/>
            <person name="Lyon D."/>
            <person name="Young C."/>
            <person name="Jensen L.J."/>
            <person name="Vertegaal A.C."/>
            <person name="Nielsen M.L."/>
        </authorList>
    </citation>
    <scope>SUMOYLATION [LARGE SCALE ANALYSIS] AT LYS-100; LYS-351; LYS-354; LYS-425; LYS-430; LYS-448; LYS-459; LYS-485; LYS-619; LYS-658; LYS-666; LYS-765 AND LYS-773</scope>
    <scope>SUMOYLATION [LARGE SCALE ANALYSIS] AT LYS-80 AND LYS-89 (ISOFORM 2)</scope>
    <scope>IDENTIFICATION BY MASS SPECTROMETRY [LARGE SCALE ANALYSIS]</scope>
</reference>
<reference evidence="17 18 19" key="17">
    <citation type="journal article" date="2022" name="Mol. Cell">
        <title>Structural basis of K63-ubiquitin chain formation by the Gordon-Holmes syndrome RBR E3 ubiquitin ligase RNF216.</title>
        <authorList>
            <person name="Cotton T.R."/>
            <person name="Cobbold S.A."/>
            <person name="Bernardini J.P."/>
            <person name="Richardson L.W."/>
            <person name="Wang X.S."/>
            <person name="Lechtenberg B.C."/>
        </authorList>
    </citation>
    <scope>X-RAY CRYSTALLOGRAPHY (2.21 ANGSTROMS) OF 649-784</scope>
    <scope>ACTIVITY REGULATION</scope>
    <scope>FUNCTION</scope>
    <scope>CATALYTIC ACTIVITY</scope>
    <scope>MUTAGENESIS OF GLU-664; ILE-672; ILE-683 AND SER-719</scope>
    <scope>PHOSPHORYLATION AT SER-719</scope>
</reference>
<reference evidence="20" key="18">
    <citation type="journal article" date="2023" name="Nat. Commun.">
        <title>The unifying catalytic mechanism of the RING-between-RING E3 ubiquitin ligase family.</title>
        <authorList>
            <person name="Wang X.S."/>
            <person name="Cotton T.R."/>
            <person name="Trevelyan S.J."/>
            <person name="Richardson L.W."/>
            <person name="Lee W.T."/>
            <person name="Silke J."/>
            <person name="Lechtenberg B.C."/>
        </authorList>
    </citation>
    <scope>X-RAY CRYSTALLOGRAPHY (3.03 ANGSTROMS) OF 510-784</scope>
</reference>
<reference key="19">
    <citation type="journal article" date="2013" name="N. Engl. J. Med.">
        <title>Ataxia, dementia, and hypogonadotropism caused by disordered ubiquitination.</title>
        <authorList>
            <person name="Margolin D.H."/>
            <person name="Kousi M."/>
            <person name="Chan Y.M."/>
            <person name="Lim E.T."/>
            <person name="Schmahmann J.D."/>
            <person name="Hadjivassiliou M."/>
            <person name="Hall J.E."/>
            <person name="Adam I."/>
            <person name="Dwyer A."/>
            <person name="Plummer L."/>
            <person name="Aldrin S.V."/>
            <person name="O'Rourke J."/>
            <person name="Kirby A."/>
            <person name="Lage K."/>
            <person name="Milunsky A."/>
            <person name="Milunsky J.M."/>
            <person name="Chan J."/>
            <person name="Hedley-Whyte E.T."/>
            <person name="Daly M.J."/>
            <person name="Katsanis N."/>
            <person name="Seminara S.B."/>
        </authorList>
    </citation>
    <scope>VARIANTS GDHS CYS-660 AND CYS-694</scope>
</reference>
<keyword id="KW-0002">3D-structure</keyword>
<keyword id="KW-0025">Alternative splicing</keyword>
<keyword id="KW-0053">Apoptosis</keyword>
<keyword id="KW-0175">Coiled coil</keyword>
<keyword id="KW-0963">Cytoplasm</keyword>
<keyword id="KW-0968">Cytoplasmic vesicle</keyword>
<keyword id="KW-0225">Disease variant</keyword>
<keyword id="KW-0945">Host-virus interaction</keyword>
<keyword id="KW-1016">Hypogonadotropic hypogonadism</keyword>
<keyword id="KW-1017">Isopeptide bond</keyword>
<keyword id="KW-0479">Metal-binding</keyword>
<keyword id="KW-0597">Phosphoprotein</keyword>
<keyword id="KW-1267">Proteomics identification</keyword>
<keyword id="KW-1185">Reference proteome</keyword>
<keyword id="KW-0677">Repeat</keyword>
<keyword id="KW-0808">Transferase</keyword>
<keyword id="KW-0832">Ubl conjugation</keyword>
<keyword id="KW-0833">Ubl conjugation pathway</keyword>
<keyword id="KW-0862">Zinc</keyword>
<keyword id="KW-0863">Zinc-finger</keyword>
<comment type="function">
    <molecule>Isoform 1</molecule>
    <text evidence="2 7 9 11 12 13">E3 ubiquitin ligase which accepts ubiquitin from specific E2 ubiquitin-conjugating enzymes, and then transfers it to substrates promoting their ubiquitination (PubMed:34998453). Plays a role in the regulation of antiviral responses by promoting the degradation of TRAF3, TLR4 and TLR9 (PubMed:15107846, PubMed:19893624). In turn, down-regulates NF-kappa-B and IRF3 activation as well as beta interferon production. Also participates in the regulation of autophagy by ubiquitinating BECN1 leading to its degradation and autophagy inhibition (PubMed:25484083). Plays a role in ARC-dependent synaptic plasticity by mediating ARC ubiquitination resulting in its rapid proteasomal degradation (PubMed:24945773). Plays aso an essential role in spermatogenesis and male fertility (By similarity). Mechanistically, regulates meiosis by promoting the degradation of PRKACB through the ubiquitin-mediated lysosome pathway (By similarity). Modulates the gonadotropin-releasing hormone signal pathway by affecting the stability of STAU2 that is required for the microtubule-dependent transport of neuronal RNA from the cell body to the dendrite (By similarity).</text>
</comment>
<comment type="function">
    <molecule>Isoform 3</molecule>
    <text evidence="6">Inhibits TNF and IL-1 mediated activation of NF-kappa-B. Promotes TNF and RIP mediated apoptosis.</text>
</comment>
<comment type="catalytic activity">
    <reaction evidence="11 13">
        <text>S-ubiquitinyl-[E2 ubiquitin-conjugating enzyme]-L-cysteine + [acceptor protein]-L-lysine = [E2 ubiquitin-conjugating enzyme]-L-cysteine + N(6)-ubiquitinyl-[acceptor protein]-L-lysine.</text>
        <dbReference type="EC" id="2.3.2.27"/>
    </reaction>
</comment>
<comment type="activity regulation">
    <text evidence="13">Allosterically activated by 'Lys-63'-linked di-ubiquitin.</text>
</comment>
<comment type="pathway">
    <text>Protein modification; protein ubiquitination.</text>
</comment>
<comment type="subunit">
    <text evidence="6 7 9">Interacts with UBE2L3 and to some extent with UBE2L6. Interacts with TRAF3, TLR3, TLR4, TLR5 and TLR9. Isoform 3/ZIN binds RIPK1.</text>
</comment>
<comment type="subunit">
    <text evidence="8">(Microbial infection) Isoform 3/ZIN binds RIPK1 and HIV Vif.</text>
</comment>
<comment type="interaction">
    <interactant intactId="EBI-723313">
        <id>Q9NWF9</id>
    </interactant>
    <interactant intactId="EBI-6149008">
        <id>O75808</id>
        <label>CAPN15</label>
    </interactant>
    <organismsDiffer>false</organismsDiffer>
    <experiments>3</experiments>
</comment>
<comment type="interaction">
    <interactant intactId="EBI-723313">
        <id>Q9NWF9</id>
    </interactant>
    <interactant intactId="EBI-11978259">
        <id>Q92567-2</id>
        <label>FAM168A</label>
    </interactant>
    <organismsDiffer>false</organismsDiffer>
    <experiments>3</experiments>
</comment>
<comment type="interaction">
    <interactant intactId="EBI-723313">
        <id>Q9NWF9</id>
    </interactant>
    <interactant intactId="EBI-6148525">
        <id>O15037</id>
        <label>KHNYN</label>
    </interactant>
    <organismsDiffer>false</organismsDiffer>
    <experiments>3</experiments>
</comment>
<comment type="interaction">
    <interactant intactId="EBI-723313">
        <id>Q9NWF9</id>
    </interactant>
    <interactant intactId="EBI-2556145">
        <id>Q14149</id>
        <label>MORC3</label>
    </interactant>
    <organismsDiffer>false</organismsDiffer>
    <experiments>3</experiments>
</comment>
<comment type="interaction">
    <interactant intactId="EBI-723313">
        <id>Q9NWF9</id>
    </interactant>
    <interactant intactId="EBI-11980301">
        <id>Q8N3F0</id>
        <label>MTURN</label>
    </interactant>
    <organismsDiffer>false</organismsDiffer>
    <experiments>3</experiments>
</comment>
<comment type="interaction">
    <interactant intactId="EBI-723313">
        <id>Q9NWF9</id>
    </interactant>
    <interactant intactId="EBI-748974">
        <id>Q96CV9</id>
        <label>OPTN</label>
    </interactant>
    <organismsDiffer>false</organismsDiffer>
    <experiments>3</experiments>
</comment>
<comment type="interaction">
    <interactant intactId="EBI-723313">
        <id>Q9NWF9</id>
    </interactant>
    <interactant intactId="EBI-527670">
        <id>P21580</id>
        <label>TNFAIP3</label>
    </interactant>
    <organismsDiffer>false</organismsDiffer>
    <experiments>3</experiments>
</comment>
<comment type="interaction">
    <interactant intactId="EBI-723313">
        <id>Q9NWF9</id>
    </interactant>
    <interactant intactId="EBI-749370">
        <id>Q9BSL1</id>
        <label>UBAC1</label>
    </interactant>
    <organismsDiffer>false</organismsDiffer>
    <experiments>3</experiments>
</comment>
<comment type="interaction">
    <interactant intactId="EBI-723313">
        <id>Q9NWF9</id>
    </interactant>
    <interactant intactId="EBI-7353612">
        <id>P57075-2</id>
        <label>UBASH3A</label>
    </interactant>
    <organismsDiffer>false</organismsDiffer>
    <experiments>3</experiments>
</comment>
<comment type="interaction">
    <interactant intactId="EBI-723313">
        <id>Q9NWF9</id>
    </interactant>
    <interactant intactId="EBI-1380492">
        <id>Q8TF42</id>
        <label>UBASH3B</label>
    </interactant>
    <organismsDiffer>false</organismsDiffer>
    <experiments>3</experiments>
</comment>
<comment type="interaction">
    <interactant intactId="EBI-723313">
        <id>Q9NWF9</id>
    </interactant>
    <interactant intactId="EBI-711173">
        <id>P68036</id>
        <label>UBE2L3</label>
    </interactant>
    <organismsDiffer>false</organismsDiffer>
    <experiments>3</experiments>
</comment>
<comment type="interaction">
    <interactant intactId="EBI-723313">
        <id>Q9NWF9</id>
    </interactant>
    <interactant intactId="EBI-2129974">
        <id>O14933</id>
        <label>UBE2L6</label>
    </interactant>
    <organismsDiffer>false</organismsDiffer>
    <experiments>3</experiments>
</comment>
<comment type="interaction">
    <interactant intactId="EBI-723313">
        <id>Q9NWF9</id>
    </interactant>
    <interactant intactId="EBI-12072186">
        <id>P45974-2</id>
        <label>USP5</label>
    </interactant>
    <organismsDiffer>false</organismsDiffer>
    <experiments>3</experiments>
</comment>
<comment type="interaction">
    <interactant intactId="EBI-723313">
        <id>Q9NWF9</id>
    </interactant>
    <interactant intactId="EBI-2510804">
        <id>Q5VVQ6</id>
        <label>YOD1</label>
    </interactant>
    <organismsDiffer>false</organismsDiffer>
    <experiments>3</experiments>
</comment>
<comment type="interaction">
    <interactant intactId="EBI-723313">
        <id>Q9NWF9</id>
    </interactant>
    <interactant intactId="EBI-3921109">
        <id>Q8N6M9</id>
        <label>ZFAND2A</label>
    </interactant>
    <organismsDiffer>false</organismsDiffer>
    <experiments>3</experiments>
</comment>
<comment type="interaction">
    <interactant intactId="EBI-723337">
        <id>Q9NWF9-3</id>
    </interactant>
    <interactant intactId="EBI-779991">
        <id>P12504</id>
        <label>vif</label>
    </interactant>
    <organismsDiffer>true</organismsDiffer>
    <experiments>4</experiments>
</comment>
<comment type="subcellular location">
    <subcellularLocation>
        <location>Cytoplasm</location>
    </subcellularLocation>
    <subcellularLocation>
        <location evidence="11">Cytoplasmic vesicle</location>
        <location evidence="11">Clathrin-coated vesicle</location>
    </subcellularLocation>
</comment>
<comment type="alternative products">
    <event type="alternative splicing"/>
    <isoform>
        <id>Q9NWF9-2</id>
        <name>1</name>
        <name>TRIAD3A</name>
        <sequence type="displayed"/>
    </isoform>
    <isoform>
        <id>Q9NWF9-1</id>
        <name>2</name>
        <name>TRIAD3B</name>
        <sequence type="described" ref="VSP_012444"/>
    </isoform>
    <isoform>
        <id>Q9NWF9-3</id>
        <name>3</name>
        <name>ZIN</name>
        <name>TRIAD3</name>
        <sequence type="described" ref="VSP_012443"/>
    </isoform>
</comment>
<comment type="tissue specificity">
    <text>Ubiquitous, with the highest levels of expression in testis and peripheral blood leukocytes.</text>
</comment>
<comment type="domain">
    <text evidence="1">The RING-type zinc finger domain mediates binding to an E2 ubiquitin-conjugating enzyme.</text>
</comment>
<comment type="PTM">
    <text>Auto-ubiquitinated.</text>
</comment>
<comment type="PTM">
    <text evidence="13">Phosphorylation at Ser-719 enhances acceptor ubiquitin binding and chain-type specificity towards 'Lys-63' di-ubiquitin but not di-ubiquitin with other linkage types.</text>
</comment>
<comment type="disease" evidence="10">
    <disease id="DI-03788">
        <name>Gordon Holmes syndrome</name>
        <acronym>GDHS</acronym>
        <description>A disease characterized by cerebellar symptoms and signs of sex steroid deficiency. Clinical features include cerebellar and brain stem atrophy, cerebellar ataxia, hypothalamic LHRH deficiency, hypogonadotrophic hypogonadism, lack of secondary sexual characteristics, and infertility.</description>
        <dbReference type="MIM" id="212840"/>
    </disease>
    <text>The disease is caused by variants affecting the gene represented in this entry.</text>
</comment>
<comment type="miscellaneous">
    <molecule>Isoform 3</molecule>
    <text evidence="16">4 different alternatively spliced mRNAs code for this protein isoform.</text>
</comment>
<comment type="sequence caution" evidence="16">
    <conflict type="erroneous initiation">
        <sequence resource="EMBL-CDS" id="BAA91422"/>
    </conflict>
    <text>Truncated N-terminus.</text>
</comment>
<protein>
    <recommendedName>
        <fullName>E3 ubiquitin-protein ligase RNF216</fullName>
        <ecNumber evidence="11 13">2.3.2.27</ecNumber>
    </recommendedName>
    <alternativeName>
        <fullName>RING finger protein 216</fullName>
    </alternativeName>
    <alternativeName>
        <fullName evidence="16">RING-type E3 ubiquitin transferase RNF216</fullName>
    </alternativeName>
    <alternativeName>
        <fullName>Triad domain-containing protein 3</fullName>
    </alternativeName>
    <alternativeName>
        <fullName>Ubiquitin-conjugating enzyme 7-interacting protein 1</fullName>
    </alternativeName>
    <alternativeName>
        <fullName>Zinc finger protein inhibiting NF-kappa-B</fullName>
    </alternativeName>
</protein>
<organism>
    <name type="scientific">Homo sapiens</name>
    <name type="common">Human</name>
    <dbReference type="NCBI Taxonomy" id="9606"/>
    <lineage>
        <taxon>Eukaryota</taxon>
        <taxon>Metazoa</taxon>
        <taxon>Chordata</taxon>
        <taxon>Craniata</taxon>
        <taxon>Vertebrata</taxon>
        <taxon>Euteleostomi</taxon>
        <taxon>Mammalia</taxon>
        <taxon>Eutheria</taxon>
        <taxon>Euarchontoglires</taxon>
        <taxon>Primates</taxon>
        <taxon>Haplorrhini</taxon>
        <taxon>Catarrhini</taxon>
        <taxon>Hominidae</taxon>
        <taxon>Homo</taxon>
    </lineage>
</organism>
<proteinExistence type="evidence at protein level"/>